<comment type="function">
    <text evidence="1">May be involved in proper membrane localization of Rab GTPases.</text>
</comment>
<comment type="subunit">
    <text evidence="1">Interacts with the YIP1 family members yip1 and yip5, and with several Rab GTPases.</text>
</comment>
<comment type="subcellular location">
    <subcellularLocation>
        <location evidence="2">Membrane</location>
        <topology evidence="2">Multi-pass membrane protein</topology>
    </subcellularLocation>
</comment>
<comment type="similarity">
    <text evidence="2">Belongs to the YIP1 family.</text>
</comment>
<evidence type="ECO:0000250" key="1">
    <source>
        <dbReference type="UniProtKB" id="P53093"/>
    </source>
</evidence>
<evidence type="ECO:0000255" key="2"/>
<evidence type="ECO:0000269" key="3">
    <source>
    </source>
</evidence>
<name>YIP4_SCHPO</name>
<dbReference type="EMBL" id="CU329670">
    <property type="protein sequence ID" value="CAB90140.1"/>
    <property type="molecule type" value="Genomic_DNA"/>
</dbReference>
<dbReference type="RefSeq" id="NP_593881.1">
    <property type="nucleotide sequence ID" value="NM_001019311.2"/>
</dbReference>
<dbReference type="BioGRID" id="279990">
    <property type="interactions" value="19"/>
</dbReference>
<dbReference type="FunCoup" id="Q9P6P8">
    <property type="interactions" value="291"/>
</dbReference>
<dbReference type="IntAct" id="Q9P6P8">
    <property type="interactions" value="2"/>
</dbReference>
<dbReference type="STRING" id="284812.Q9P6P8"/>
<dbReference type="iPTMnet" id="Q9P6P8"/>
<dbReference type="PaxDb" id="4896-SPAC644.13c.1"/>
<dbReference type="EnsemblFungi" id="SPAC644.13c.1">
    <property type="protein sequence ID" value="SPAC644.13c.1:pep"/>
    <property type="gene ID" value="SPAC644.13c"/>
</dbReference>
<dbReference type="KEGG" id="spo:2543575"/>
<dbReference type="PomBase" id="SPAC644.13c"/>
<dbReference type="VEuPathDB" id="FungiDB:SPAC644.13c"/>
<dbReference type="eggNOG" id="KOG2946">
    <property type="taxonomic scope" value="Eukaryota"/>
</dbReference>
<dbReference type="HOGENOM" id="CLU_059592_3_1_1"/>
<dbReference type="InParanoid" id="Q9P6P8"/>
<dbReference type="OMA" id="IKFYHVL"/>
<dbReference type="PhylomeDB" id="Q9P6P8"/>
<dbReference type="PRO" id="PR:Q9P6P8"/>
<dbReference type="Proteomes" id="UP000002485">
    <property type="component" value="Chromosome I"/>
</dbReference>
<dbReference type="GO" id="GO:0005783">
    <property type="term" value="C:endoplasmic reticulum"/>
    <property type="evidence" value="ECO:0007005"/>
    <property type="project" value="PomBase"/>
</dbReference>
<dbReference type="GO" id="GO:0016020">
    <property type="term" value="C:membrane"/>
    <property type="evidence" value="ECO:0007669"/>
    <property type="project" value="UniProtKB-SubCell"/>
</dbReference>
<dbReference type="GO" id="GO:0005802">
    <property type="term" value="C:trans-Golgi network"/>
    <property type="evidence" value="ECO:0000318"/>
    <property type="project" value="GO_Central"/>
</dbReference>
<dbReference type="GO" id="GO:0031267">
    <property type="term" value="F:small GTPase binding"/>
    <property type="evidence" value="ECO:0000266"/>
    <property type="project" value="PomBase"/>
</dbReference>
<dbReference type="GO" id="GO:0006888">
    <property type="term" value="P:endoplasmic reticulum to Golgi vesicle-mediated transport"/>
    <property type="evidence" value="ECO:0007669"/>
    <property type="project" value="InterPro"/>
</dbReference>
<dbReference type="GO" id="GO:0006886">
    <property type="term" value="P:intracellular protein transport"/>
    <property type="evidence" value="ECO:0000305"/>
    <property type="project" value="PomBase"/>
</dbReference>
<dbReference type="InterPro" id="IPR045231">
    <property type="entry name" value="Yip1/4-like"/>
</dbReference>
<dbReference type="InterPro" id="IPR006977">
    <property type="entry name" value="Yip1_dom"/>
</dbReference>
<dbReference type="PANTHER" id="PTHR21236">
    <property type="entry name" value="GOLGI MEMBRANE PROTEIN YIP1"/>
    <property type="match status" value="1"/>
</dbReference>
<dbReference type="PANTHER" id="PTHR21236:SF1">
    <property type="entry name" value="PROTEIN YIPF6"/>
    <property type="match status" value="1"/>
</dbReference>
<dbReference type="Pfam" id="PF04893">
    <property type="entry name" value="Yip1"/>
    <property type="match status" value="1"/>
</dbReference>
<accession>Q9P6P8</accession>
<proteinExistence type="evidence at protein level"/>
<sequence>MTDIGKHNTEIEQDEMENLLRMDPVRSSLDVESRAIEPDNIAGESIVETRFTGGDSLDEPIRVTLFNEFRAIGEKLVYVLYPKNAQVLRDWDLWGPLIFSLVIALALALSTDKIERESVFTVVVALIWFGEAVCSLNIKLLGANISIFQSMCILGYSSFPLMIASIVCAFVPLIFIRIPVIVAMYAWTLFAAMGVLQNSNLSNKKLLAVYPLFLFYFSLAWIIFL</sequence>
<reference key="1">
    <citation type="journal article" date="2002" name="Nature">
        <title>The genome sequence of Schizosaccharomyces pombe.</title>
        <authorList>
            <person name="Wood V."/>
            <person name="Gwilliam R."/>
            <person name="Rajandream M.A."/>
            <person name="Lyne M.H."/>
            <person name="Lyne R."/>
            <person name="Stewart A."/>
            <person name="Sgouros J.G."/>
            <person name="Peat N."/>
            <person name="Hayles J."/>
            <person name="Baker S.G."/>
            <person name="Basham D."/>
            <person name="Bowman S."/>
            <person name="Brooks K."/>
            <person name="Brown D."/>
            <person name="Brown S."/>
            <person name="Chillingworth T."/>
            <person name="Churcher C.M."/>
            <person name="Collins M."/>
            <person name="Connor R."/>
            <person name="Cronin A."/>
            <person name="Davis P."/>
            <person name="Feltwell T."/>
            <person name="Fraser A."/>
            <person name="Gentles S."/>
            <person name="Goble A."/>
            <person name="Hamlin N."/>
            <person name="Harris D.E."/>
            <person name="Hidalgo J."/>
            <person name="Hodgson G."/>
            <person name="Holroyd S."/>
            <person name="Hornsby T."/>
            <person name="Howarth S."/>
            <person name="Huckle E.J."/>
            <person name="Hunt S."/>
            <person name="Jagels K."/>
            <person name="James K.D."/>
            <person name="Jones L."/>
            <person name="Jones M."/>
            <person name="Leather S."/>
            <person name="McDonald S."/>
            <person name="McLean J."/>
            <person name="Mooney P."/>
            <person name="Moule S."/>
            <person name="Mungall K.L."/>
            <person name="Murphy L.D."/>
            <person name="Niblett D."/>
            <person name="Odell C."/>
            <person name="Oliver K."/>
            <person name="O'Neil S."/>
            <person name="Pearson D."/>
            <person name="Quail M.A."/>
            <person name="Rabbinowitsch E."/>
            <person name="Rutherford K.M."/>
            <person name="Rutter S."/>
            <person name="Saunders D."/>
            <person name="Seeger K."/>
            <person name="Sharp S."/>
            <person name="Skelton J."/>
            <person name="Simmonds M.N."/>
            <person name="Squares R."/>
            <person name="Squares S."/>
            <person name="Stevens K."/>
            <person name="Taylor K."/>
            <person name="Taylor R.G."/>
            <person name="Tivey A."/>
            <person name="Walsh S.V."/>
            <person name="Warren T."/>
            <person name="Whitehead S."/>
            <person name="Woodward J.R."/>
            <person name="Volckaert G."/>
            <person name="Aert R."/>
            <person name="Robben J."/>
            <person name="Grymonprez B."/>
            <person name="Weltjens I."/>
            <person name="Vanstreels E."/>
            <person name="Rieger M."/>
            <person name="Schaefer M."/>
            <person name="Mueller-Auer S."/>
            <person name="Gabel C."/>
            <person name="Fuchs M."/>
            <person name="Duesterhoeft A."/>
            <person name="Fritzc C."/>
            <person name="Holzer E."/>
            <person name="Moestl D."/>
            <person name="Hilbert H."/>
            <person name="Borzym K."/>
            <person name="Langer I."/>
            <person name="Beck A."/>
            <person name="Lehrach H."/>
            <person name="Reinhardt R."/>
            <person name="Pohl T.M."/>
            <person name="Eger P."/>
            <person name="Zimmermann W."/>
            <person name="Wedler H."/>
            <person name="Wambutt R."/>
            <person name="Purnelle B."/>
            <person name="Goffeau A."/>
            <person name="Cadieu E."/>
            <person name="Dreano S."/>
            <person name="Gloux S."/>
            <person name="Lelaure V."/>
            <person name="Mottier S."/>
            <person name="Galibert F."/>
            <person name="Aves S.J."/>
            <person name="Xiang Z."/>
            <person name="Hunt C."/>
            <person name="Moore K."/>
            <person name="Hurst S.M."/>
            <person name="Lucas M."/>
            <person name="Rochet M."/>
            <person name="Gaillardin C."/>
            <person name="Tallada V.A."/>
            <person name="Garzon A."/>
            <person name="Thode G."/>
            <person name="Daga R.R."/>
            <person name="Cruzado L."/>
            <person name="Jimenez J."/>
            <person name="Sanchez M."/>
            <person name="del Rey F."/>
            <person name="Benito J."/>
            <person name="Dominguez A."/>
            <person name="Revuelta J.L."/>
            <person name="Moreno S."/>
            <person name="Armstrong J."/>
            <person name="Forsburg S.L."/>
            <person name="Cerutti L."/>
            <person name="Lowe T."/>
            <person name="McCombie W.R."/>
            <person name="Paulsen I."/>
            <person name="Potashkin J."/>
            <person name="Shpakovski G.V."/>
            <person name="Ussery D."/>
            <person name="Barrell B.G."/>
            <person name="Nurse P."/>
        </authorList>
    </citation>
    <scope>NUCLEOTIDE SEQUENCE [LARGE SCALE GENOMIC DNA]</scope>
    <source>
        <strain>972 / ATCC 24843</strain>
    </source>
</reference>
<reference key="2">
    <citation type="journal article" date="2008" name="J. Proteome Res.">
        <title>Phosphoproteome analysis of fission yeast.</title>
        <authorList>
            <person name="Wilson-Grady J.T."/>
            <person name="Villen J."/>
            <person name="Gygi S.P."/>
        </authorList>
    </citation>
    <scope>PHOSPHORYLATION [LARGE SCALE ANALYSIS] AT SER-27 AND SER-28</scope>
    <scope>IDENTIFICATION BY MASS SPECTROMETRY</scope>
</reference>
<keyword id="KW-0472">Membrane</keyword>
<keyword id="KW-0597">Phosphoprotein</keyword>
<keyword id="KW-1185">Reference proteome</keyword>
<keyword id="KW-0812">Transmembrane</keyword>
<keyword id="KW-1133">Transmembrane helix</keyword>
<feature type="chain" id="PRO_0000259416" description="Protein YIP4">
    <location>
        <begin position="1"/>
        <end position="225"/>
    </location>
</feature>
<feature type="transmembrane region" description="Helical" evidence="2">
    <location>
        <begin position="91"/>
        <end position="111"/>
    </location>
</feature>
<feature type="transmembrane region" description="Helical" evidence="2">
    <location>
        <begin position="118"/>
        <end position="138"/>
    </location>
</feature>
<feature type="transmembrane region" description="Helical" evidence="2">
    <location>
        <begin position="154"/>
        <end position="176"/>
    </location>
</feature>
<feature type="transmembrane region" description="Helical" evidence="2">
    <location>
        <begin position="180"/>
        <end position="199"/>
    </location>
</feature>
<feature type="transmembrane region" description="Helical" evidence="2">
    <location>
        <begin position="205"/>
        <end position="225"/>
    </location>
</feature>
<feature type="modified residue" description="Phosphoserine" evidence="3">
    <location>
        <position position="27"/>
    </location>
</feature>
<feature type="modified residue" description="Phosphoserine" evidence="3">
    <location>
        <position position="28"/>
    </location>
</feature>
<protein>
    <recommendedName>
        <fullName>Protein YIP4</fullName>
    </recommendedName>
    <alternativeName>
        <fullName>YPT-interacting protein 4</fullName>
    </alternativeName>
</protein>
<organism>
    <name type="scientific">Schizosaccharomyces pombe (strain 972 / ATCC 24843)</name>
    <name type="common">Fission yeast</name>
    <dbReference type="NCBI Taxonomy" id="284812"/>
    <lineage>
        <taxon>Eukaryota</taxon>
        <taxon>Fungi</taxon>
        <taxon>Dikarya</taxon>
        <taxon>Ascomycota</taxon>
        <taxon>Taphrinomycotina</taxon>
        <taxon>Schizosaccharomycetes</taxon>
        <taxon>Schizosaccharomycetales</taxon>
        <taxon>Schizosaccharomycetaceae</taxon>
        <taxon>Schizosaccharomyces</taxon>
    </lineage>
</organism>
<gene>
    <name type="ORF">SPAC644.13c</name>
</gene>